<evidence type="ECO:0000255" key="1">
    <source>
        <dbReference type="HAMAP-Rule" id="MF_01664"/>
    </source>
</evidence>
<evidence type="ECO:0000305" key="2"/>
<organism>
    <name type="scientific">Alkalihalophilus pseudofirmus (strain ATCC BAA-2126 / JCM 17055 / OF4)</name>
    <name type="common">Bacillus pseudofirmus</name>
    <dbReference type="NCBI Taxonomy" id="398511"/>
    <lineage>
        <taxon>Bacteria</taxon>
        <taxon>Bacillati</taxon>
        <taxon>Bacillota</taxon>
        <taxon>Bacilli</taxon>
        <taxon>Bacillales</taxon>
        <taxon>Bacillaceae</taxon>
        <taxon>Alkalihalophilus</taxon>
    </lineage>
</organism>
<protein>
    <recommendedName>
        <fullName evidence="1">Heme A synthase</fullName>
        <shortName evidence="1">HAS</shortName>
        <ecNumber evidence="1">1.17.99.9</ecNumber>
    </recommendedName>
    <alternativeName>
        <fullName evidence="1">Cytochrome aa3-controlling protein</fullName>
    </alternativeName>
</protein>
<reference key="1">
    <citation type="journal article" date="1993" name="J. Biol. Chem.">
        <title>Cloning of the cta operon from alkaliphilic Bacillus firmus OF4 and characterization of the pH-regulated cytochrome caa3 oxidase it encodes.</title>
        <authorList>
            <person name="Quirk P.G."/>
            <person name="Hicks D.B."/>
            <person name="Krulwich T.A."/>
        </authorList>
    </citation>
    <scope>NUCLEOTIDE SEQUENCE [GENOMIC DNA]</scope>
</reference>
<reference key="2">
    <citation type="journal article" date="2011" name="Environ. Microbiol.">
        <title>Genome of alkaliphilic Bacillus pseudofirmus OF4 reveals adaptations that support the ability to grow in an external pH range from 7.5 to 11.4.</title>
        <authorList>
            <person name="Janto B."/>
            <person name="Ahmed A."/>
            <person name="Ito M."/>
            <person name="Liu J."/>
            <person name="Hicks D.B."/>
            <person name="Pagni S."/>
            <person name="Fackelmayer O.J."/>
            <person name="Smith T.A."/>
            <person name="Earl J."/>
            <person name="Elbourne L.D."/>
            <person name="Hassan K."/>
            <person name="Paulsen I.T."/>
            <person name="Kolsto A.B."/>
            <person name="Tourasse N.J."/>
            <person name="Ehrlich G.D."/>
            <person name="Boissy R."/>
            <person name="Ivey D.M."/>
            <person name="Li G."/>
            <person name="Xue Y."/>
            <person name="Ma Y."/>
            <person name="Hu F.Z."/>
            <person name="Krulwich T.A."/>
        </authorList>
    </citation>
    <scope>NUCLEOTIDE SEQUENCE [LARGE SCALE GENOMIC DNA]</scope>
    <source>
        <strain>ATCC BAA-2126 / JCM 17055 / OF4</strain>
    </source>
</reference>
<gene>
    <name evidence="1" type="primary">ctaA</name>
    <name type="ordered locus">BpOF4_00930</name>
</gene>
<dbReference type="EC" id="1.17.99.9" evidence="1"/>
<dbReference type="EMBL" id="M94110">
    <property type="protein sequence ID" value="AAA22362.1"/>
    <property type="molecule type" value="Genomic_DNA"/>
</dbReference>
<dbReference type="EMBL" id="CP001878">
    <property type="protein sequence ID" value="ADC48254.1"/>
    <property type="molecule type" value="Genomic_DNA"/>
</dbReference>
<dbReference type="PIR" id="A45335">
    <property type="entry name" value="A45335"/>
</dbReference>
<dbReference type="RefSeq" id="WP_012959536.1">
    <property type="nucleotide sequence ID" value="NC_013791.2"/>
</dbReference>
<dbReference type="SMR" id="Q04443"/>
<dbReference type="STRING" id="398511.BpOF4_00930"/>
<dbReference type="KEGG" id="bpf:BpOF4_00930"/>
<dbReference type="eggNOG" id="COG1612">
    <property type="taxonomic scope" value="Bacteria"/>
</dbReference>
<dbReference type="HOGENOM" id="CLU_041525_3_0_9"/>
<dbReference type="UniPathway" id="UPA00269">
    <property type="reaction ID" value="UER00713"/>
</dbReference>
<dbReference type="Proteomes" id="UP000001544">
    <property type="component" value="Chromosome"/>
</dbReference>
<dbReference type="GO" id="GO:0005886">
    <property type="term" value="C:plasma membrane"/>
    <property type="evidence" value="ECO:0007669"/>
    <property type="project" value="UniProtKB-SubCell"/>
</dbReference>
<dbReference type="GO" id="GO:0046872">
    <property type="term" value="F:metal ion binding"/>
    <property type="evidence" value="ECO:0007669"/>
    <property type="project" value="UniProtKB-KW"/>
</dbReference>
<dbReference type="GO" id="GO:0016653">
    <property type="term" value="F:oxidoreductase activity, acting on NAD(P)H, heme protein as acceptor"/>
    <property type="evidence" value="ECO:0007669"/>
    <property type="project" value="InterPro"/>
</dbReference>
<dbReference type="GO" id="GO:0006784">
    <property type="term" value="P:heme A biosynthetic process"/>
    <property type="evidence" value="ECO:0007669"/>
    <property type="project" value="UniProtKB-UniRule"/>
</dbReference>
<dbReference type="HAMAP" id="MF_01664">
    <property type="entry name" value="HemeA_synth_type1"/>
    <property type="match status" value="1"/>
</dbReference>
<dbReference type="InterPro" id="IPR003780">
    <property type="entry name" value="COX15/CtaA_fam"/>
</dbReference>
<dbReference type="InterPro" id="IPR050450">
    <property type="entry name" value="COX15/CtaA_HemeA_synthase"/>
</dbReference>
<dbReference type="InterPro" id="IPR023755">
    <property type="entry name" value="HemeA_Synthase_type1"/>
</dbReference>
<dbReference type="PANTHER" id="PTHR35457">
    <property type="entry name" value="HEME A SYNTHASE"/>
    <property type="match status" value="1"/>
</dbReference>
<dbReference type="PANTHER" id="PTHR35457:SF1">
    <property type="entry name" value="HEME A SYNTHASE"/>
    <property type="match status" value="1"/>
</dbReference>
<dbReference type="Pfam" id="PF02628">
    <property type="entry name" value="COX15-CtaA"/>
    <property type="match status" value="1"/>
</dbReference>
<sequence>MHKRLKIYSVITSIGVLIVLLQGALVTKTGSGEGCGATWPLCFGEVIPTNPAIETIIEYSHRIVSGLVGAMIIILAIWAWKQLKHMREAKALSFAAVILIIFQGLLGAGAVVFGQSKAILALHFGISAMSLAAVVLLTILAFEDGREHTMAPKVSRGFKYYVFFVITYCYAVIYSGAYVKHSEATLACAGFPLCNGQIFPGLYGPVGAHYFHRVVGTILLLFLLILMIWTLSRYRHYRVLTWTAVLSFLLVVGQFISGISIVFTQNALSVGLIHALIISILFSALSYMTMIITRPSH</sequence>
<accession>Q04443</accession>
<accession>D3FU52</accession>
<proteinExistence type="inferred from homology"/>
<keyword id="KW-1003">Cell membrane</keyword>
<keyword id="KW-1015">Disulfide bond</keyword>
<keyword id="KW-0350">Heme biosynthesis</keyword>
<keyword id="KW-0408">Iron</keyword>
<keyword id="KW-0472">Membrane</keyword>
<keyword id="KW-0479">Metal-binding</keyword>
<keyword id="KW-0560">Oxidoreductase</keyword>
<keyword id="KW-1185">Reference proteome</keyword>
<keyword id="KW-0812">Transmembrane</keyword>
<keyword id="KW-1133">Transmembrane helix</keyword>
<comment type="function">
    <text evidence="1">Catalyzes the conversion of heme O to heme A by two successive hydroxylations of the methyl group at C8. The first hydroxylation forms heme I, the second hydroxylation results in an unstable dihydroxymethyl group, which spontaneously dehydrates, resulting in the formyl group of heme A.</text>
</comment>
<comment type="catalytic activity">
    <reaction evidence="1">
        <text>Fe(II)-heme o + 2 A + H2O = Fe(II)-heme a + 2 AH2</text>
        <dbReference type="Rhea" id="RHEA:63388"/>
        <dbReference type="ChEBI" id="CHEBI:13193"/>
        <dbReference type="ChEBI" id="CHEBI:15377"/>
        <dbReference type="ChEBI" id="CHEBI:17499"/>
        <dbReference type="ChEBI" id="CHEBI:60530"/>
        <dbReference type="ChEBI" id="CHEBI:61715"/>
        <dbReference type="EC" id="1.17.99.9"/>
    </reaction>
    <physiologicalReaction direction="left-to-right" evidence="1">
        <dbReference type="Rhea" id="RHEA:63389"/>
    </physiologicalReaction>
</comment>
<comment type="cofactor">
    <cofactor evidence="1">
        <name>heme b</name>
        <dbReference type="ChEBI" id="CHEBI:60344"/>
    </cofactor>
</comment>
<comment type="pathway">
    <text evidence="1">Porphyrin-containing compound metabolism; heme A biosynthesis; heme A from heme O: step 1/1.</text>
</comment>
<comment type="subunit">
    <text evidence="1">Interacts with CtaB.</text>
</comment>
<comment type="subcellular location">
    <subcellularLocation>
        <location evidence="1">Cell membrane</location>
        <topology evidence="1">Multi-pass membrane protein</topology>
    </subcellularLocation>
</comment>
<comment type="domain">
    <text evidence="1">The N-half (TM1-TM4) and C-half (TM5-TM8) domains are connected by an intracellular loop. Each domain is formed from four-helix bundles and they align in a pseudo twofold symmetry manner. The N-half domain is the substrate-heme O binding domain and the C-half domain is the cofactor heme B binding domain.</text>
</comment>
<comment type="domain">
    <text evidence="1">The cysteines of disulfide bond Cys-35 and Cys-42 may be involved in transfer of reducing equivalents from quinol in the membrane to the active site of the enzyme.</text>
</comment>
<comment type="similarity">
    <text evidence="1">Belongs to the COX15/CtaA family. Type 1 subfamily.</text>
</comment>
<feature type="chain" id="PRO_0000079486" description="Heme A synthase">
    <location>
        <begin position="1"/>
        <end position="297"/>
    </location>
</feature>
<feature type="topological domain" description="Cytoplasmic" evidence="1">
    <location>
        <begin position="1"/>
        <end position="6"/>
    </location>
</feature>
<feature type="transmembrane region" description="Helical" evidence="1">
    <location>
        <begin position="7"/>
        <end position="27"/>
    </location>
</feature>
<feature type="topological domain" description="Extracellular" evidence="1">
    <location>
        <begin position="28"/>
        <end position="62"/>
    </location>
</feature>
<feature type="transmembrane region" description="Helical" evidence="1">
    <location>
        <begin position="63"/>
        <end position="83"/>
    </location>
</feature>
<feature type="topological domain" description="Cytoplasmic" evidence="1">
    <location>
        <begin position="84"/>
        <end position="93"/>
    </location>
</feature>
<feature type="transmembrane region" description="Helical" evidence="1">
    <location>
        <begin position="94"/>
        <end position="114"/>
    </location>
</feature>
<feature type="topological domain" description="Extracellular" evidence="1">
    <location>
        <begin position="115"/>
        <end position="118"/>
    </location>
</feature>
<feature type="transmembrane region" description="Helical" evidence="1">
    <location>
        <begin position="119"/>
        <end position="139"/>
    </location>
</feature>
<feature type="topological domain" description="Cytoplasmic" evidence="1">
    <location>
        <begin position="140"/>
        <end position="156"/>
    </location>
</feature>
<feature type="transmembrane region" description="Helical" evidence="1">
    <location>
        <begin position="157"/>
        <end position="177"/>
    </location>
</feature>
<feature type="topological domain" description="Extracellular" evidence="1">
    <location>
        <begin position="178"/>
        <end position="210"/>
    </location>
</feature>
<feature type="transmembrane region" description="Helical" evidence="1">
    <location>
        <begin position="211"/>
        <end position="231"/>
    </location>
</feature>
<feature type="topological domain" description="Cytoplasmic" evidence="1">
    <location>
        <begin position="232"/>
        <end position="242"/>
    </location>
</feature>
<feature type="transmembrane region" description="Helical" evidence="1">
    <location>
        <begin position="243"/>
        <end position="263"/>
    </location>
</feature>
<feature type="topological domain" description="Extracellular" evidence="1">
    <location>
        <begin position="264"/>
        <end position="271"/>
    </location>
</feature>
<feature type="transmembrane region" description="Helical" evidence="1">
    <location>
        <begin position="272"/>
        <end position="292"/>
    </location>
</feature>
<feature type="topological domain" description="Cytoplasmic" evidence="1">
    <location>
        <begin position="293"/>
        <end position="297"/>
    </location>
</feature>
<feature type="active site" evidence="1">
    <location>
        <position position="58"/>
    </location>
</feature>
<feature type="binding site" description="axial binding residue" evidence="1">
    <location>
        <position position="61"/>
    </location>
    <ligand>
        <name>heme o</name>
        <dbReference type="ChEBI" id="CHEBI:24480"/>
    </ligand>
    <ligandPart>
        <name>Fe</name>
        <dbReference type="ChEBI" id="CHEBI:18248"/>
    </ligandPart>
</feature>
<feature type="binding site" description="axial binding residue" evidence="1">
    <location>
        <position position="123"/>
    </location>
    <ligand>
        <name>heme o</name>
        <dbReference type="ChEBI" id="CHEBI:24480"/>
    </ligand>
    <ligandPart>
        <name>Fe</name>
        <dbReference type="ChEBI" id="CHEBI:18248"/>
    </ligandPart>
</feature>
<feature type="binding site" description="axial binding residue" evidence="1">
    <location>
        <position position="212"/>
    </location>
    <ligand>
        <name>heme b</name>
        <dbReference type="ChEBI" id="CHEBI:60344"/>
    </ligand>
    <ligandPart>
        <name>Fe</name>
        <dbReference type="ChEBI" id="CHEBI:18248"/>
    </ligandPart>
</feature>
<feature type="binding site" description="axial binding residue" evidence="1">
    <location>
        <position position="274"/>
    </location>
    <ligand>
        <name>heme b</name>
        <dbReference type="ChEBI" id="CHEBI:60344"/>
    </ligand>
    <ligandPart>
        <name>Fe</name>
        <dbReference type="ChEBI" id="CHEBI:18248"/>
    </ligandPart>
</feature>
<feature type="disulfide bond" description="Essential for catalytic activity" evidence="1">
    <location>
        <begin position="35"/>
        <end position="42"/>
    </location>
</feature>
<feature type="disulfide bond" evidence="1">
    <location>
        <begin position="188"/>
        <end position="194"/>
    </location>
</feature>
<feature type="sequence conflict" description="In Ref. 1; AAA22362." evidence="2" ref="1">
    <original>V</original>
    <variation>A</variation>
    <location>
        <position position="19"/>
    </location>
</feature>
<feature type="sequence conflict" description="In Ref. 1; AAA22362." evidence="2" ref="1">
    <original>V</original>
    <variation>A</variation>
    <location>
        <position position="68"/>
    </location>
</feature>
<feature type="sequence conflict" description="In Ref. 1; AAA22362." evidence="2" ref="1">
    <original>F</original>
    <variation>S</variation>
    <location>
        <position position="102"/>
    </location>
</feature>
<feature type="sequence conflict" description="In Ref. 1; AAA22362." evidence="2" ref="1">
    <original>V</original>
    <variation>A</variation>
    <location>
        <position position="111"/>
    </location>
</feature>
<name>CTAA_ALKPO</name>